<feature type="chain" id="PRO_0000210824" description="Fe(2+) transporter FeoB">
    <location>
        <begin position="1"/>
        <end position="772"/>
    </location>
</feature>
<feature type="transmembrane region" description="Helical" evidence="2">
    <location>
        <begin position="282"/>
        <end position="302"/>
    </location>
</feature>
<feature type="transmembrane region" description="Helical" evidence="2">
    <location>
        <begin position="309"/>
        <end position="329"/>
    </location>
</feature>
<feature type="transmembrane region" description="Helical" evidence="2">
    <location>
        <begin position="344"/>
        <end position="366"/>
    </location>
</feature>
<feature type="transmembrane region" description="Helical" evidence="2">
    <location>
        <begin position="383"/>
        <end position="403"/>
    </location>
</feature>
<feature type="transmembrane region" description="Helical" evidence="2">
    <location>
        <begin position="427"/>
        <end position="447"/>
    </location>
</feature>
<feature type="transmembrane region" description="Helical" evidence="2">
    <location>
        <begin position="453"/>
        <end position="473"/>
    </location>
</feature>
<feature type="transmembrane region" description="Helical" evidence="2">
    <location>
        <begin position="518"/>
        <end position="538"/>
    </location>
</feature>
<feature type="transmembrane region" description="Helical" evidence="2">
    <location>
        <begin position="664"/>
        <end position="684"/>
    </location>
</feature>
<feature type="transmembrane region" description="Helical" evidence="2">
    <location>
        <begin position="691"/>
        <end position="711"/>
    </location>
</feature>
<feature type="transmembrane region" description="Helical" evidence="2">
    <location>
        <begin position="722"/>
        <end position="742"/>
    </location>
</feature>
<feature type="domain" description="FeoB-type G" evidence="3">
    <location>
        <begin position="3"/>
        <end position="169"/>
    </location>
</feature>
<feature type="binding site" evidence="3">
    <location>
        <begin position="10"/>
        <end position="17"/>
    </location>
    <ligand>
        <name>GTP</name>
        <dbReference type="ChEBI" id="CHEBI:37565"/>
        <label>1</label>
    </ligand>
</feature>
<feature type="binding site" evidence="3">
    <location>
        <begin position="35"/>
        <end position="39"/>
    </location>
    <ligand>
        <name>GTP</name>
        <dbReference type="ChEBI" id="CHEBI:37565"/>
        <label>2</label>
    </ligand>
</feature>
<feature type="binding site" evidence="3">
    <location>
        <begin position="56"/>
        <end position="59"/>
    </location>
    <ligand>
        <name>GTP</name>
        <dbReference type="ChEBI" id="CHEBI:37565"/>
        <label>3</label>
    </ligand>
</feature>
<feature type="binding site" evidence="3">
    <location>
        <begin position="120"/>
        <end position="123"/>
    </location>
    <ligand>
        <name>GTP</name>
        <dbReference type="ChEBI" id="CHEBI:37565"/>
    </ligand>
</feature>
<feature type="binding site" evidence="3">
    <location>
        <begin position="149"/>
        <end position="151"/>
    </location>
    <ligand>
        <name>GTP</name>
        <dbReference type="ChEBI" id="CHEBI:37565"/>
    </ligand>
</feature>
<comment type="function">
    <text evidence="1">Probable transporter of a GTP-driven Fe(2+) uptake system.</text>
</comment>
<comment type="subcellular location">
    <subcellularLocation>
        <location evidence="1">Cell inner membrane</location>
        <topology evidence="1">Multi-pass membrane protein</topology>
    </subcellularLocation>
</comment>
<comment type="induction">
    <text evidence="1">Iron uptake is repressed by the global regulator Fur.</text>
</comment>
<comment type="similarity">
    <text evidence="3">Belongs to the TRAFAC class TrmE-Era-EngA-EngB-Septin-like GTPase superfamily. FeoB GTPase (TC 9.A.8) family.</text>
</comment>
<name>FEOB_SALCH</name>
<keyword id="KW-0997">Cell inner membrane</keyword>
<keyword id="KW-1003">Cell membrane</keyword>
<keyword id="KW-0342">GTP-binding</keyword>
<keyword id="KW-0406">Ion transport</keyword>
<keyword id="KW-0408">Iron</keyword>
<keyword id="KW-0410">Iron transport</keyword>
<keyword id="KW-0472">Membrane</keyword>
<keyword id="KW-0547">Nucleotide-binding</keyword>
<keyword id="KW-0812">Transmembrane</keyword>
<keyword id="KW-1133">Transmembrane helix</keyword>
<keyword id="KW-0813">Transport</keyword>
<evidence type="ECO:0000250" key="1">
    <source>
        <dbReference type="UniProtKB" id="P33650"/>
    </source>
</evidence>
<evidence type="ECO:0000255" key="2"/>
<evidence type="ECO:0000255" key="3">
    <source>
        <dbReference type="PROSITE-ProRule" id="PRU01048"/>
    </source>
</evidence>
<evidence type="ECO:0000305" key="4"/>
<organism>
    <name type="scientific">Salmonella choleraesuis (strain SC-B67)</name>
    <dbReference type="NCBI Taxonomy" id="321314"/>
    <lineage>
        <taxon>Bacteria</taxon>
        <taxon>Pseudomonadati</taxon>
        <taxon>Pseudomonadota</taxon>
        <taxon>Gammaproteobacteria</taxon>
        <taxon>Enterobacterales</taxon>
        <taxon>Enterobacteriaceae</taxon>
        <taxon>Salmonella</taxon>
    </lineage>
</organism>
<reference key="1">
    <citation type="journal article" date="2005" name="Nucleic Acids Res.">
        <title>The genome sequence of Salmonella enterica serovar Choleraesuis, a highly invasive and resistant zoonotic pathogen.</title>
        <authorList>
            <person name="Chiu C.-H."/>
            <person name="Tang P."/>
            <person name="Chu C."/>
            <person name="Hu S."/>
            <person name="Bao Q."/>
            <person name="Yu J."/>
            <person name="Chou Y.-Y."/>
            <person name="Wang H.-S."/>
            <person name="Lee Y.-S."/>
        </authorList>
    </citation>
    <scope>NUCLEOTIDE SEQUENCE [LARGE SCALE GENOMIC DNA]</scope>
    <source>
        <strain>SC-B67</strain>
    </source>
</reference>
<sequence length="772" mass="84142">MKKLTIGLIGNPNSGKTTLFNQLTGARQRVGNWAGVTVERKEGQFATTDHQVTLVDLPGTYSLTTISSQTSLDEQIACHYILSGDADLLINVVDASNLERNLYLTLQLLELGIPCIVALNMLDIAEKQQVRIDVDALSTRLGCPVVPLVSTRGRGIEALKLAIDRHNANDNVELVHYAQPLLREAGFLADAMAQEMPLQQRRWLGLQMLEGDIYSRAYAGEAAQNLDTSLARLKDEMDDPALHIADARYQCIAAICDVVSNTLTAEPSRFTRAVDKIILNRFLGLPIFLFVMYLMFLLAINIGGALQPLFDAGSVAIFIHGIQWIGYTLHFPDWLTIFLAQGLGGGINTVLPLVPQIGMMYLFLSFLEDSGYMARAAFVMDRLMQALGLPGKSFVPLIVGFGCNVPSVMGARTLDAPRERLMTIMMAPFMSCGARLAIFAVFAAAFFGQNGALAVFSLYVLGIVMAVLTGLMLKHTIMRGEASPFVMELPVYHVPHIKSLIIQTWQRLKGFVLRAGKVIIIVSIFLSAFNSFSLSGKIVDNINDSALASVSRVITPVFKPIGVHEDNWQATVGLFTGAMAKEVVVGTLNTLYTAENIQDEAFNPADFHLGDELLGAVDDTWQSLKDTFSLSVLANPIEASKGDGEMATGAMGVMDQKFGSAAAAYSYLIFVLLYVPCISVMGAIARESSRGWMGFSILWGLNIAYSLATLFYQVTSFSQHPTYSLICILAVIVFNVVVLSLLRRARSRVDIELLATRKNVSSCCSGTAGNCH</sequence>
<accession>Q57IW8</accession>
<proteinExistence type="inferred from homology"/>
<protein>
    <recommendedName>
        <fullName evidence="4">Fe(2+) transporter FeoB</fullName>
    </recommendedName>
    <alternativeName>
        <fullName>Ferrous iron transport protein B</fullName>
    </alternativeName>
</protein>
<gene>
    <name type="primary">feoB</name>
    <name type="ordered locus">SCH_3438</name>
</gene>
<dbReference type="EMBL" id="AE017220">
    <property type="protein sequence ID" value="AAX67344.1"/>
    <property type="molecule type" value="Genomic_DNA"/>
</dbReference>
<dbReference type="RefSeq" id="WP_000736983.1">
    <property type="nucleotide sequence ID" value="NC_006905.1"/>
</dbReference>
<dbReference type="SMR" id="Q57IW8"/>
<dbReference type="KEGG" id="sec:SCH_3438"/>
<dbReference type="HOGENOM" id="CLU_013350_3_0_6"/>
<dbReference type="Proteomes" id="UP000000538">
    <property type="component" value="Chromosome"/>
</dbReference>
<dbReference type="GO" id="GO:0005886">
    <property type="term" value="C:plasma membrane"/>
    <property type="evidence" value="ECO:0007669"/>
    <property type="project" value="UniProtKB-SubCell"/>
</dbReference>
<dbReference type="GO" id="GO:0015093">
    <property type="term" value="F:ferrous iron transmembrane transporter activity"/>
    <property type="evidence" value="ECO:0007669"/>
    <property type="project" value="InterPro"/>
</dbReference>
<dbReference type="GO" id="GO:0005525">
    <property type="term" value="F:GTP binding"/>
    <property type="evidence" value="ECO:0007669"/>
    <property type="project" value="UniProtKB-KW"/>
</dbReference>
<dbReference type="CDD" id="cd01879">
    <property type="entry name" value="FeoB"/>
    <property type="match status" value="1"/>
</dbReference>
<dbReference type="FunFam" id="3.40.50.300:FF:000426">
    <property type="entry name" value="Ferrous iron transport protein B"/>
    <property type="match status" value="1"/>
</dbReference>
<dbReference type="Gene3D" id="1.10.287.1770">
    <property type="match status" value="1"/>
</dbReference>
<dbReference type="Gene3D" id="3.40.50.300">
    <property type="entry name" value="P-loop containing nucleotide triphosphate hydrolases"/>
    <property type="match status" value="1"/>
</dbReference>
<dbReference type="InterPro" id="IPR003373">
    <property type="entry name" value="Fe2_transport_prot-B"/>
</dbReference>
<dbReference type="InterPro" id="IPR011640">
    <property type="entry name" value="Fe2_transport_prot_B_C"/>
</dbReference>
<dbReference type="InterPro" id="IPR041069">
    <property type="entry name" value="FeoB_Cyto"/>
</dbReference>
<dbReference type="InterPro" id="IPR050860">
    <property type="entry name" value="FeoB_GTPase"/>
</dbReference>
<dbReference type="InterPro" id="IPR030389">
    <property type="entry name" value="G_FEOB_dom"/>
</dbReference>
<dbReference type="InterPro" id="IPR011642">
    <property type="entry name" value="Gate_dom"/>
</dbReference>
<dbReference type="InterPro" id="IPR027417">
    <property type="entry name" value="P-loop_NTPase"/>
</dbReference>
<dbReference type="InterPro" id="IPR005225">
    <property type="entry name" value="Small_GTP-bd"/>
</dbReference>
<dbReference type="NCBIfam" id="TIGR00437">
    <property type="entry name" value="feoB"/>
    <property type="match status" value="1"/>
</dbReference>
<dbReference type="NCBIfam" id="NF007105">
    <property type="entry name" value="PRK09554.1"/>
    <property type="match status" value="1"/>
</dbReference>
<dbReference type="NCBIfam" id="TIGR00231">
    <property type="entry name" value="small_GTP"/>
    <property type="match status" value="1"/>
</dbReference>
<dbReference type="PANTHER" id="PTHR43185:SF1">
    <property type="entry name" value="FE(2+) TRANSPORTER FEOB"/>
    <property type="match status" value="1"/>
</dbReference>
<dbReference type="PANTHER" id="PTHR43185">
    <property type="entry name" value="FERROUS IRON TRANSPORT PROTEIN B"/>
    <property type="match status" value="1"/>
</dbReference>
<dbReference type="Pfam" id="PF07664">
    <property type="entry name" value="FeoB_C"/>
    <property type="match status" value="1"/>
</dbReference>
<dbReference type="Pfam" id="PF17910">
    <property type="entry name" value="FeoB_Cyto"/>
    <property type="match status" value="1"/>
</dbReference>
<dbReference type="Pfam" id="PF02421">
    <property type="entry name" value="FeoB_N"/>
    <property type="match status" value="1"/>
</dbReference>
<dbReference type="Pfam" id="PF07670">
    <property type="entry name" value="Gate"/>
    <property type="match status" value="2"/>
</dbReference>
<dbReference type="SUPFAM" id="SSF52540">
    <property type="entry name" value="P-loop containing nucleoside triphosphate hydrolases"/>
    <property type="match status" value="1"/>
</dbReference>
<dbReference type="PROSITE" id="PS51711">
    <property type="entry name" value="G_FEOB"/>
    <property type="match status" value="1"/>
</dbReference>